<proteinExistence type="inferred from homology"/>
<organism>
    <name type="scientific">Thermococcus onnurineus (strain NA1)</name>
    <dbReference type="NCBI Taxonomy" id="523850"/>
    <lineage>
        <taxon>Archaea</taxon>
        <taxon>Methanobacteriati</taxon>
        <taxon>Methanobacteriota</taxon>
        <taxon>Thermococci</taxon>
        <taxon>Thermococcales</taxon>
        <taxon>Thermococcaceae</taxon>
        <taxon>Thermococcus</taxon>
    </lineage>
</organism>
<feature type="chain" id="PRO_1000115668" description="A-type ATP synthase subunit B">
    <location>
        <begin position="1"/>
        <end position="465"/>
    </location>
</feature>
<keyword id="KW-0066">ATP synthesis</keyword>
<keyword id="KW-1003">Cell membrane</keyword>
<keyword id="KW-0375">Hydrogen ion transport</keyword>
<keyword id="KW-0406">Ion transport</keyword>
<keyword id="KW-0472">Membrane</keyword>
<keyword id="KW-0813">Transport</keyword>
<comment type="function">
    <text evidence="1">Component of the A-type ATP synthase that produces ATP from ADP in the presence of a proton gradient across the membrane. The B chain is a regulatory subunit.</text>
</comment>
<comment type="subunit">
    <text evidence="1">Has multiple subunits with at least A(3), B(3), C, D, E, F, H, I and proteolipid K(x).</text>
</comment>
<comment type="subcellular location">
    <subcellularLocation>
        <location evidence="1">Cell membrane</location>
        <topology evidence="1">Peripheral membrane protein</topology>
    </subcellularLocation>
</comment>
<comment type="similarity">
    <text evidence="1">Belongs to the ATPase alpha/beta chains family.</text>
</comment>
<accession>B6YV15</accession>
<sequence>MLMPGMEYSTVSKIYGPLMIVQGVKGVAYGEVVEIETESGEKRKGQVLEARQDMAIVQVFEGTRDLDIKTTRVRFTGETLKVPVSMDMLGRVFNGIGKPIDGGPEIIPEDRRDVHGAPLNPVARAYPRDFIQTGVSAIDGMNTLVRGQKLPIFSGSGLPHNMLAAQIARQAKVLGEEEQFAVVFAAMGITYEEANFFKKSFEETGAIERAVLFLNLADDPAIERIITPRMALTVAEYLAFDYDMQVLVILTDMTNYAEALREISAAREEVPGRRGYPGYMYTDLATIYERAGRVRGKKGSITQMPILTMPDDDITHPIPDLTGYITEGQIVLSRELYRKGIYPPIDVLPSLSRLMKDGIGKGRTRDDHPQLSQQLYAAYAEGRSLRDLVAVVGEEALSETDRKYLKFADRFEREFIAQRYDEDRSIEETLDLGWELLAELPESELKRVRKEYILKYHPKYRKREG</sequence>
<evidence type="ECO:0000255" key="1">
    <source>
        <dbReference type="HAMAP-Rule" id="MF_00310"/>
    </source>
</evidence>
<gene>
    <name evidence="1" type="primary">atpB</name>
    <name type="ordered locus">TON_1753</name>
</gene>
<protein>
    <recommendedName>
        <fullName evidence="1">A-type ATP synthase subunit B</fullName>
    </recommendedName>
</protein>
<dbReference type="EMBL" id="CP000855">
    <property type="protein sequence ID" value="ACJ17243.1"/>
    <property type="molecule type" value="Genomic_DNA"/>
</dbReference>
<dbReference type="SMR" id="B6YV15"/>
<dbReference type="STRING" id="523850.TON_1753"/>
<dbReference type="KEGG" id="ton:TON_1753"/>
<dbReference type="PATRIC" id="fig|523850.10.peg.1766"/>
<dbReference type="eggNOG" id="arCOG00865">
    <property type="taxonomic scope" value="Archaea"/>
</dbReference>
<dbReference type="HOGENOM" id="CLU_022916_0_0_2"/>
<dbReference type="Proteomes" id="UP000002727">
    <property type="component" value="Chromosome"/>
</dbReference>
<dbReference type="GO" id="GO:0005886">
    <property type="term" value="C:plasma membrane"/>
    <property type="evidence" value="ECO:0007669"/>
    <property type="project" value="UniProtKB-SubCell"/>
</dbReference>
<dbReference type="GO" id="GO:0033178">
    <property type="term" value="C:proton-transporting two-sector ATPase complex, catalytic domain"/>
    <property type="evidence" value="ECO:0007669"/>
    <property type="project" value="InterPro"/>
</dbReference>
<dbReference type="GO" id="GO:0005524">
    <property type="term" value="F:ATP binding"/>
    <property type="evidence" value="ECO:0007669"/>
    <property type="project" value="UniProtKB-UniRule"/>
</dbReference>
<dbReference type="GO" id="GO:0046933">
    <property type="term" value="F:proton-transporting ATP synthase activity, rotational mechanism"/>
    <property type="evidence" value="ECO:0007669"/>
    <property type="project" value="UniProtKB-UniRule"/>
</dbReference>
<dbReference type="GO" id="GO:0042777">
    <property type="term" value="P:proton motive force-driven plasma membrane ATP synthesis"/>
    <property type="evidence" value="ECO:0007669"/>
    <property type="project" value="UniProtKB-UniRule"/>
</dbReference>
<dbReference type="CDD" id="cd18112">
    <property type="entry name" value="ATP-synt_V_A-type_beta_C"/>
    <property type="match status" value="1"/>
</dbReference>
<dbReference type="CDD" id="cd18118">
    <property type="entry name" value="ATP-synt_V_A-type_beta_N"/>
    <property type="match status" value="1"/>
</dbReference>
<dbReference type="CDD" id="cd01135">
    <property type="entry name" value="V_A-ATPase_B"/>
    <property type="match status" value="1"/>
</dbReference>
<dbReference type="Gene3D" id="3.40.50.12240">
    <property type="match status" value="1"/>
</dbReference>
<dbReference type="HAMAP" id="MF_00310">
    <property type="entry name" value="ATP_synth_B_arch"/>
    <property type="match status" value="1"/>
</dbReference>
<dbReference type="InterPro" id="IPR055190">
    <property type="entry name" value="ATP-synt_VA_C"/>
</dbReference>
<dbReference type="InterPro" id="IPR020003">
    <property type="entry name" value="ATPase_a/bsu_AS"/>
</dbReference>
<dbReference type="InterPro" id="IPR005724">
    <property type="entry name" value="ATPase_A1-cplx_bsu"/>
</dbReference>
<dbReference type="InterPro" id="IPR004100">
    <property type="entry name" value="ATPase_F1/V1/A1_a/bsu_N"/>
</dbReference>
<dbReference type="InterPro" id="IPR000194">
    <property type="entry name" value="ATPase_F1/V1/A1_a/bsu_nucl-bd"/>
</dbReference>
<dbReference type="InterPro" id="IPR027417">
    <property type="entry name" value="P-loop_NTPase"/>
</dbReference>
<dbReference type="InterPro" id="IPR022879">
    <property type="entry name" value="V-ATPase_su_B/beta"/>
</dbReference>
<dbReference type="NCBIfam" id="TIGR01041">
    <property type="entry name" value="ATP_syn_B_arch"/>
    <property type="match status" value="1"/>
</dbReference>
<dbReference type="NCBIfam" id="NF003235">
    <property type="entry name" value="PRK04196.1"/>
    <property type="match status" value="1"/>
</dbReference>
<dbReference type="PANTHER" id="PTHR43389">
    <property type="entry name" value="V-TYPE PROTON ATPASE SUBUNIT B"/>
    <property type="match status" value="1"/>
</dbReference>
<dbReference type="PANTHER" id="PTHR43389:SF4">
    <property type="entry name" value="V-TYPE PROTON ATPASE SUBUNIT B"/>
    <property type="match status" value="1"/>
</dbReference>
<dbReference type="Pfam" id="PF00006">
    <property type="entry name" value="ATP-synt_ab"/>
    <property type="match status" value="1"/>
</dbReference>
<dbReference type="Pfam" id="PF02874">
    <property type="entry name" value="ATP-synt_ab_N"/>
    <property type="match status" value="1"/>
</dbReference>
<dbReference type="Pfam" id="PF22919">
    <property type="entry name" value="ATP-synt_VA_C"/>
    <property type="match status" value="1"/>
</dbReference>
<dbReference type="PIRSF" id="PIRSF039114">
    <property type="entry name" value="V-ATPsynth_beta/V-ATPase_B"/>
    <property type="match status" value="1"/>
</dbReference>
<dbReference type="SUPFAM" id="SSF47917">
    <property type="entry name" value="C-terminal domain of alpha and beta subunits of F1 ATP synthase"/>
    <property type="match status" value="1"/>
</dbReference>
<dbReference type="SUPFAM" id="SSF52540">
    <property type="entry name" value="P-loop containing nucleoside triphosphate hydrolases"/>
    <property type="match status" value="1"/>
</dbReference>
<dbReference type="PROSITE" id="PS00152">
    <property type="entry name" value="ATPASE_ALPHA_BETA"/>
    <property type="match status" value="1"/>
</dbReference>
<reference key="1">
    <citation type="journal article" date="2008" name="J. Bacteriol.">
        <title>The complete genome sequence of Thermococcus onnurineus NA1 reveals a mixed heterotrophic and carboxydotrophic metabolism.</title>
        <authorList>
            <person name="Lee H.S."/>
            <person name="Kang S.G."/>
            <person name="Bae S.S."/>
            <person name="Lim J.K."/>
            <person name="Cho Y."/>
            <person name="Kim Y.J."/>
            <person name="Jeon J.H."/>
            <person name="Cha S.-S."/>
            <person name="Kwon K.K."/>
            <person name="Kim H.-T."/>
            <person name="Park C.-J."/>
            <person name="Lee H.-W."/>
            <person name="Kim S.I."/>
            <person name="Chun J."/>
            <person name="Colwell R.R."/>
            <person name="Kim S.-J."/>
            <person name="Lee J.-H."/>
        </authorList>
    </citation>
    <scope>NUCLEOTIDE SEQUENCE [LARGE SCALE GENOMIC DNA]</scope>
    <source>
        <strain>NA1</strain>
    </source>
</reference>
<name>AATB_THEON</name>